<proteinExistence type="evidence at protein level"/>
<evidence type="ECO:0000256" key="1">
    <source>
        <dbReference type="SAM" id="MobiDB-lite"/>
    </source>
</evidence>
<evidence type="ECO:0000269" key="2">
    <source>
    </source>
</evidence>
<evidence type="ECO:0000303" key="3">
    <source>
    </source>
</evidence>
<dbReference type="EMBL" id="AK027539">
    <property type="protein sequence ID" value="BAG51339.1"/>
    <property type="molecule type" value="mRNA"/>
</dbReference>
<dbReference type="EMBL" id="AK074948">
    <property type="protein sequence ID" value="BAG52038.1"/>
    <property type="molecule type" value="mRNA"/>
</dbReference>
<dbReference type="EMBL" id="CH471056">
    <property type="protein sequence ID" value="EAX04855.1"/>
    <property type="molecule type" value="Genomic_DNA"/>
</dbReference>
<dbReference type="EMBL" id="BC065017">
    <property type="protein sequence ID" value="AAH65017.1"/>
    <property type="molecule type" value="mRNA"/>
</dbReference>
<dbReference type="EMBL" id="BC094775">
    <property type="protein sequence ID" value="AAH94775.1"/>
    <property type="molecule type" value="mRNA"/>
</dbReference>
<dbReference type="CCDS" id="CCDS34088.1"/>
<dbReference type="RefSeq" id="NP_001008394.1">
    <property type="nucleotide sequence ID" value="NM_001008393.4"/>
</dbReference>
<dbReference type="SMR" id="Q504U0"/>
<dbReference type="BioGRID" id="128401">
    <property type="interactions" value="16"/>
</dbReference>
<dbReference type="FunCoup" id="Q504U0">
    <property type="interactions" value="834"/>
</dbReference>
<dbReference type="IntAct" id="Q504U0">
    <property type="interactions" value="12"/>
</dbReference>
<dbReference type="STRING" id="9606.ENSP00000368503"/>
<dbReference type="GlyGen" id="Q504U0">
    <property type="glycosylation" value="1 site"/>
</dbReference>
<dbReference type="iPTMnet" id="Q504U0"/>
<dbReference type="PhosphoSitePlus" id="Q504U0"/>
<dbReference type="BioMuta" id="C4orf46"/>
<dbReference type="DMDM" id="74740214"/>
<dbReference type="jPOST" id="Q504U0"/>
<dbReference type="MassIVE" id="Q504U0"/>
<dbReference type="PaxDb" id="9606-ENSP00000368503"/>
<dbReference type="PeptideAtlas" id="Q504U0"/>
<dbReference type="ProteomicsDB" id="62404"/>
<dbReference type="Pumba" id="Q504U0"/>
<dbReference type="Antibodypedia" id="53666">
    <property type="antibodies" value="129 antibodies from 17 providers"/>
</dbReference>
<dbReference type="DNASU" id="201725"/>
<dbReference type="Ensembl" id="ENST00000379205.5">
    <property type="protein sequence ID" value="ENSP00000368503.4"/>
    <property type="gene ID" value="ENSG00000205208.5"/>
</dbReference>
<dbReference type="GeneID" id="201725"/>
<dbReference type="KEGG" id="hsa:201725"/>
<dbReference type="MANE-Select" id="ENST00000379205.5">
    <property type="protein sequence ID" value="ENSP00000368503.4"/>
    <property type="RefSeq nucleotide sequence ID" value="NM_001008393.4"/>
    <property type="RefSeq protein sequence ID" value="NP_001008394.1"/>
</dbReference>
<dbReference type="UCSC" id="uc003iqa.4">
    <property type="organism name" value="human"/>
</dbReference>
<dbReference type="AGR" id="HGNC:27320"/>
<dbReference type="CTD" id="201725"/>
<dbReference type="DisGeNET" id="201725"/>
<dbReference type="GeneCards" id="C4orf46"/>
<dbReference type="HGNC" id="HGNC:27320">
    <property type="gene designation" value="C4orf46"/>
</dbReference>
<dbReference type="HPA" id="ENSG00000205208">
    <property type="expression patterns" value="Low tissue specificity"/>
</dbReference>
<dbReference type="MIM" id="616210">
    <property type="type" value="gene"/>
</dbReference>
<dbReference type="neXtProt" id="NX_Q504U0"/>
<dbReference type="OpenTargets" id="ENSG00000205208"/>
<dbReference type="PharmGKB" id="PA162379968"/>
<dbReference type="VEuPathDB" id="HostDB:ENSG00000205208"/>
<dbReference type="eggNOG" id="ENOG502SUFC">
    <property type="taxonomic scope" value="Eukaryota"/>
</dbReference>
<dbReference type="GeneTree" id="ENSGT00390000003125"/>
<dbReference type="HOGENOM" id="CLU_171943_0_0_1"/>
<dbReference type="InParanoid" id="Q504U0"/>
<dbReference type="OMA" id="FKCMENA"/>
<dbReference type="OrthoDB" id="9946198at2759"/>
<dbReference type="PAN-GO" id="Q504U0">
    <property type="GO annotations" value="0 GO annotations based on evolutionary models"/>
</dbReference>
<dbReference type="PhylomeDB" id="Q504U0"/>
<dbReference type="TreeFam" id="TF338687"/>
<dbReference type="PathwayCommons" id="Q504U0"/>
<dbReference type="SignaLink" id="Q504U0"/>
<dbReference type="BioGRID-ORCS" id="201725">
    <property type="hits" value="22 hits in 1129 CRISPR screens"/>
</dbReference>
<dbReference type="ChiTaRS" id="C4orf46">
    <property type="organism name" value="human"/>
</dbReference>
<dbReference type="GenomeRNAi" id="201725"/>
<dbReference type="Pharos" id="Q504U0">
    <property type="development level" value="Tdark"/>
</dbReference>
<dbReference type="PRO" id="PR:Q504U0"/>
<dbReference type="Proteomes" id="UP000005640">
    <property type="component" value="Chromosome 4"/>
</dbReference>
<dbReference type="RNAct" id="Q504U0">
    <property type="molecule type" value="protein"/>
</dbReference>
<dbReference type="Bgee" id="ENSG00000205208">
    <property type="expression patterns" value="Expressed in buccal mucosa cell and 143 other cell types or tissues"/>
</dbReference>
<dbReference type="ExpressionAtlas" id="Q504U0">
    <property type="expression patterns" value="baseline and differential"/>
</dbReference>
<dbReference type="GO" id="GO:0005829">
    <property type="term" value="C:cytosol"/>
    <property type="evidence" value="ECO:0000314"/>
    <property type="project" value="HPA"/>
</dbReference>
<dbReference type="InterPro" id="IPR031457">
    <property type="entry name" value="RCDG1"/>
</dbReference>
<dbReference type="PANTHER" id="PTHR31641">
    <property type="entry name" value="RENAL CANCER DIFFERENTIATION GENE 1 PROTEIN"/>
    <property type="match status" value="1"/>
</dbReference>
<dbReference type="PANTHER" id="PTHR31641:SF2">
    <property type="entry name" value="RENAL CANCER DIFFERENTIATION GENE 1 PROTEIN"/>
    <property type="match status" value="1"/>
</dbReference>
<dbReference type="Pfam" id="PF15725">
    <property type="entry name" value="RCDG1"/>
    <property type="match status" value="1"/>
</dbReference>
<gene>
    <name type="primary">C4orf46</name>
    <name type="synonym">RCDG1</name>
</gene>
<organism>
    <name type="scientific">Homo sapiens</name>
    <name type="common">Human</name>
    <dbReference type="NCBI Taxonomy" id="9606"/>
    <lineage>
        <taxon>Eukaryota</taxon>
        <taxon>Metazoa</taxon>
        <taxon>Chordata</taxon>
        <taxon>Craniata</taxon>
        <taxon>Vertebrata</taxon>
        <taxon>Euteleostomi</taxon>
        <taxon>Mammalia</taxon>
        <taxon>Eutheria</taxon>
        <taxon>Euarchontoglires</taxon>
        <taxon>Primates</taxon>
        <taxon>Haplorrhini</taxon>
        <taxon>Catarrhini</taxon>
        <taxon>Hominidae</taxon>
        <taxon>Homo</taxon>
    </lineage>
</organism>
<accession>Q504U0</accession>
<accession>B3KNH7</accession>
<sequence length="113" mass="11899">MADPEELQVSSPPPPPPSSPSSSDASAASSPGGPVSLGWPVPSRSSGPTVDQLEEVELQIGDAAFSLTKLLEATSAVSAQVEELAFKCTENARFLKTWRDLLKEGYDSLKPDD</sequence>
<reference key="1">
    <citation type="journal article" date="2004" name="Nat. Genet.">
        <title>Complete sequencing and characterization of 21,243 full-length human cDNAs.</title>
        <authorList>
            <person name="Ota T."/>
            <person name="Suzuki Y."/>
            <person name="Nishikawa T."/>
            <person name="Otsuki T."/>
            <person name="Sugiyama T."/>
            <person name="Irie R."/>
            <person name="Wakamatsu A."/>
            <person name="Hayashi K."/>
            <person name="Sato H."/>
            <person name="Nagai K."/>
            <person name="Kimura K."/>
            <person name="Makita H."/>
            <person name="Sekine M."/>
            <person name="Obayashi M."/>
            <person name="Nishi T."/>
            <person name="Shibahara T."/>
            <person name="Tanaka T."/>
            <person name="Ishii S."/>
            <person name="Yamamoto J."/>
            <person name="Saito K."/>
            <person name="Kawai Y."/>
            <person name="Isono Y."/>
            <person name="Nakamura Y."/>
            <person name="Nagahari K."/>
            <person name="Murakami K."/>
            <person name="Yasuda T."/>
            <person name="Iwayanagi T."/>
            <person name="Wagatsuma M."/>
            <person name="Shiratori A."/>
            <person name="Sudo H."/>
            <person name="Hosoiri T."/>
            <person name="Kaku Y."/>
            <person name="Kodaira H."/>
            <person name="Kondo H."/>
            <person name="Sugawara M."/>
            <person name="Takahashi M."/>
            <person name="Kanda K."/>
            <person name="Yokoi T."/>
            <person name="Furuya T."/>
            <person name="Kikkawa E."/>
            <person name="Omura Y."/>
            <person name="Abe K."/>
            <person name="Kamihara K."/>
            <person name="Katsuta N."/>
            <person name="Sato K."/>
            <person name="Tanikawa M."/>
            <person name="Yamazaki M."/>
            <person name="Ninomiya K."/>
            <person name="Ishibashi T."/>
            <person name="Yamashita H."/>
            <person name="Murakawa K."/>
            <person name="Fujimori K."/>
            <person name="Tanai H."/>
            <person name="Kimata M."/>
            <person name="Watanabe M."/>
            <person name="Hiraoka S."/>
            <person name="Chiba Y."/>
            <person name="Ishida S."/>
            <person name="Ono Y."/>
            <person name="Takiguchi S."/>
            <person name="Watanabe S."/>
            <person name="Yosida M."/>
            <person name="Hotuta T."/>
            <person name="Kusano J."/>
            <person name="Kanehori K."/>
            <person name="Takahashi-Fujii A."/>
            <person name="Hara H."/>
            <person name="Tanase T.-O."/>
            <person name="Nomura Y."/>
            <person name="Togiya S."/>
            <person name="Komai F."/>
            <person name="Hara R."/>
            <person name="Takeuchi K."/>
            <person name="Arita M."/>
            <person name="Imose N."/>
            <person name="Musashino K."/>
            <person name="Yuuki H."/>
            <person name="Oshima A."/>
            <person name="Sasaki N."/>
            <person name="Aotsuka S."/>
            <person name="Yoshikawa Y."/>
            <person name="Matsunawa H."/>
            <person name="Ichihara T."/>
            <person name="Shiohata N."/>
            <person name="Sano S."/>
            <person name="Moriya S."/>
            <person name="Momiyama H."/>
            <person name="Satoh N."/>
            <person name="Takami S."/>
            <person name="Terashima Y."/>
            <person name="Suzuki O."/>
            <person name="Nakagawa S."/>
            <person name="Senoh A."/>
            <person name="Mizoguchi H."/>
            <person name="Goto Y."/>
            <person name="Shimizu F."/>
            <person name="Wakebe H."/>
            <person name="Hishigaki H."/>
            <person name="Watanabe T."/>
            <person name="Sugiyama A."/>
            <person name="Takemoto M."/>
            <person name="Kawakami B."/>
            <person name="Yamazaki M."/>
            <person name="Watanabe K."/>
            <person name="Kumagai A."/>
            <person name="Itakura S."/>
            <person name="Fukuzumi Y."/>
            <person name="Fujimori Y."/>
            <person name="Komiyama M."/>
            <person name="Tashiro H."/>
            <person name="Tanigami A."/>
            <person name="Fujiwara T."/>
            <person name="Ono T."/>
            <person name="Yamada K."/>
            <person name="Fujii Y."/>
            <person name="Ozaki K."/>
            <person name="Hirao M."/>
            <person name="Ohmori Y."/>
            <person name="Kawabata A."/>
            <person name="Hikiji T."/>
            <person name="Kobatake N."/>
            <person name="Inagaki H."/>
            <person name="Ikema Y."/>
            <person name="Okamoto S."/>
            <person name="Okitani R."/>
            <person name="Kawakami T."/>
            <person name="Noguchi S."/>
            <person name="Itoh T."/>
            <person name="Shigeta K."/>
            <person name="Senba T."/>
            <person name="Matsumura K."/>
            <person name="Nakajima Y."/>
            <person name="Mizuno T."/>
            <person name="Morinaga M."/>
            <person name="Sasaki M."/>
            <person name="Togashi T."/>
            <person name="Oyama M."/>
            <person name="Hata H."/>
            <person name="Watanabe M."/>
            <person name="Komatsu T."/>
            <person name="Mizushima-Sugano J."/>
            <person name="Satoh T."/>
            <person name="Shirai Y."/>
            <person name="Takahashi Y."/>
            <person name="Nakagawa K."/>
            <person name="Okumura K."/>
            <person name="Nagase T."/>
            <person name="Nomura N."/>
            <person name="Kikuchi H."/>
            <person name="Masuho Y."/>
            <person name="Yamashita R."/>
            <person name="Nakai K."/>
            <person name="Yada T."/>
            <person name="Nakamura Y."/>
            <person name="Ohara O."/>
            <person name="Isogai T."/>
            <person name="Sugano S."/>
        </authorList>
    </citation>
    <scope>NUCLEOTIDE SEQUENCE [LARGE SCALE MRNA]</scope>
</reference>
<reference key="2">
    <citation type="submission" date="2005-09" db="EMBL/GenBank/DDBJ databases">
        <authorList>
            <person name="Mural R.J."/>
            <person name="Istrail S."/>
            <person name="Sutton G.G."/>
            <person name="Florea L."/>
            <person name="Halpern A.L."/>
            <person name="Mobarry C.M."/>
            <person name="Lippert R."/>
            <person name="Walenz B."/>
            <person name="Shatkay H."/>
            <person name="Dew I."/>
            <person name="Miller J.R."/>
            <person name="Flanigan M.J."/>
            <person name="Edwards N.J."/>
            <person name="Bolanos R."/>
            <person name="Fasulo D."/>
            <person name="Halldorsson B.V."/>
            <person name="Hannenhalli S."/>
            <person name="Turner R."/>
            <person name="Yooseph S."/>
            <person name="Lu F."/>
            <person name="Nusskern D.R."/>
            <person name="Shue B.C."/>
            <person name="Zheng X.H."/>
            <person name="Zhong F."/>
            <person name="Delcher A.L."/>
            <person name="Huson D.H."/>
            <person name="Kravitz S.A."/>
            <person name="Mouchard L."/>
            <person name="Reinert K."/>
            <person name="Remington K.A."/>
            <person name="Clark A.G."/>
            <person name="Waterman M.S."/>
            <person name="Eichler E.E."/>
            <person name="Adams M.D."/>
            <person name="Hunkapiller M.W."/>
            <person name="Myers E.W."/>
            <person name="Venter J.C."/>
        </authorList>
    </citation>
    <scope>NUCLEOTIDE SEQUENCE [LARGE SCALE GENOMIC DNA]</scope>
</reference>
<reference key="3">
    <citation type="journal article" date="2004" name="Genome Res.">
        <title>The status, quality, and expansion of the NIH full-length cDNA project: the Mammalian Gene Collection (MGC).</title>
        <authorList>
            <consortium name="The MGC Project Team"/>
        </authorList>
    </citation>
    <scope>NUCLEOTIDE SEQUENCE [LARGE SCALE MRNA]</scope>
    <source>
        <tissue>Pancreas</tissue>
        <tissue>Placenta</tissue>
    </source>
</reference>
<reference key="4">
    <citation type="journal article" date="2014" name="Mol. Med. Report.">
        <title>Expression and clinical significance of RCDG1 in renal cell carcinoma: a novel renal cancer-associated gene.</title>
        <authorList>
            <person name="Yu Z."/>
            <person name="Ni L."/>
            <person name="Chen D."/>
            <person name="Su Z."/>
            <person name="Yu W."/>
            <person name="Zhang Q."/>
            <person name="Wang Y."/>
            <person name="Li C."/>
            <person name="Gui Y."/>
            <person name="Lai Y."/>
        </authorList>
    </citation>
    <scope>SUBCELLULAR LOCATION</scope>
    <scope>TISSUE SPECIFICITY</scope>
</reference>
<feature type="chain" id="PRO_0000335689" description="Renal cancer differentiation gene 1 protein">
    <location>
        <begin position="1"/>
        <end position="113"/>
    </location>
</feature>
<feature type="region of interest" description="Disordered" evidence="1">
    <location>
        <begin position="1"/>
        <end position="50"/>
    </location>
</feature>
<feature type="compositionally biased region" description="Low complexity" evidence="1">
    <location>
        <begin position="20"/>
        <end position="31"/>
    </location>
</feature>
<protein>
    <recommendedName>
        <fullName evidence="3">Renal cancer differentiation gene 1 protein</fullName>
    </recommendedName>
</protein>
<keyword id="KW-0963">Cytoplasm</keyword>
<keyword id="KW-1267">Proteomics identification</keyword>
<keyword id="KW-1185">Reference proteome</keyword>
<comment type="interaction">
    <interactant intactId="EBI-6657981">
        <id>Q504U0</id>
    </interactant>
    <interactant intactId="EBI-465781">
        <id>Q9UL45</id>
        <label>BLOC1S6</label>
    </interactant>
    <organismsDiffer>false</organismsDiffer>
    <experiments>3</experiments>
</comment>
<comment type="interaction">
    <interactant intactId="EBI-6657981">
        <id>Q504U0</id>
    </interactant>
    <interactant intactId="EBI-1181367">
        <id>Q01850</id>
        <label>CDR2</label>
    </interactant>
    <organismsDiffer>false</organismsDiffer>
    <experiments>9</experiments>
</comment>
<comment type="interaction">
    <interactant intactId="EBI-6657981">
        <id>Q504U0</id>
    </interactant>
    <interactant intactId="EBI-11063830">
        <id>Q86X02</id>
        <label>CDR2L</label>
    </interactant>
    <organismsDiffer>false</organismsDiffer>
    <experiments>9</experiments>
</comment>
<comment type="interaction">
    <interactant intactId="EBI-6657981">
        <id>Q504U0</id>
    </interactant>
    <interactant intactId="EBI-7116203">
        <id>O75031</id>
        <label>HSF2BP</label>
    </interactant>
    <organismsDiffer>false</organismsDiffer>
    <experiments>3</experiments>
</comment>
<comment type="interaction">
    <interactant intactId="EBI-6657981">
        <id>Q504U0</id>
    </interactant>
    <interactant intactId="EBI-1056174">
        <id>O60921</id>
        <label>HUS1</label>
    </interactant>
    <organismsDiffer>false</organismsDiffer>
    <experiments>6</experiments>
</comment>
<comment type="interaction">
    <interactant intactId="EBI-6657981">
        <id>Q504U0</id>
    </interactant>
    <interactant intactId="EBI-739657">
        <id>Q9BQD3</id>
        <label>KXD1</label>
    </interactant>
    <organismsDiffer>false</organismsDiffer>
    <experiments>6</experiments>
</comment>
<comment type="interaction">
    <interactant intactId="EBI-6657981">
        <id>Q504U0</id>
    </interactant>
    <interactant intactId="EBI-79165">
        <id>Q9NRD5</id>
        <label>PICK1</label>
    </interactant>
    <organismsDiffer>false</organismsDiffer>
    <experiments>3</experiments>
</comment>
<comment type="interaction">
    <interactant intactId="EBI-6657981">
        <id>Q504U0</id>
    </interactant>
    <interactant intactId="EBI-10178002">
        <id>P0C1Z6-2</id>
        <label>TFPT</label>
    </interactant>
    <organismsDiffer>false</organismsDiffer>
    <experiments>3</experiments>
</comment>
<comment type="subcellular location">
    <subcellularLocation>
        <location evidence="2">Cytoplasm</location>
    </subcellularLocation>
</comment>
<comment type="tissue specificity">
    <text evidence="2">Expressed in the kidney, in epithelial cells in both proximal tubules and distal convoluted tubules.</text>
</comment>
<name>CD046_HUMAN</name>